<keyword id="KW-0961">Cell wall biogenesis/degradation</keyword>
<keyword id="KW-1015">Disulfide bond</keyword>
<keyword id="KW-0325">Glycoprotein</keyword>
<keyword id="KW-0479">Metal-binding</keyword>
<keyword id="KW-1185">Reference proteome</keyword>
<keyword id="KW-0964">Secreted</keyword>
<keyword id="KW-0732">Signal</keyword>
<keyword id="KW-0926">Vacuole</keyword>
<keyword id="KW-0862">Zinc</keyword>
<proteinExistence type="inferred from homology"/>
<sequence>MRHLLSLLVLLIASAALVSAVPAGSIITPQPPVEPVHLLSSQPSDPRRPWIRLRDWIIESIWGIEKPASRRFPLNDSPRNRSPPSRILARYGSDVVLRFSLRNHDEAEALAQAADILFLDVWASTPAFVDIRLAEEVIPSLLGLLPNSLQTAYTPLIDNLAERIYTTYPSKKPIGLEGQSGFASSSRPAPKFGDLFFHEYQPLSVIIPWMRLLASMFPSHVRMISVGVSYEGREIPALRLSAGSSTAASGPRKTIIVTGGSHAREWIGTSTVNHVMYTLITKYGKSKAVTRLLQDFDWIMIPTINPDGYVYTWETDRLWRKNRQRTSLRFCPGIDLDRAWGFEWDGGRTRANPCSENYAGDEPFEGMEAQQLAQWALNETQNNNADIVSFLDLHSYSQTILYPFSYSCSSIPPTLESLEELGLGLAKAIRYATHEIYDVTSACEGIVTASAADNNPGRFFPIGGNSGGSALDWFYHQVHATYSYQIKLRDRGSYGFLLPSEHIIPTGKEIYNVVLKLGSFLIGGDSFDVDWESELFDLSKDESDLDSRYSKSNDRSPAYLHNANGPLPNIDEDEDKEWVMVEEEDYTDDDDDDDDDDEEEEEEEEDTYWATEHTYEFRRRR</sequence>
<dbReference type="EMBL" id="AM270267">
    <property type="protein sequence ID" value="CAK46187.1"/>
    <property type="molecule type" value="Genomic_DNA"/>
</dbReference>
<dbReference type="RefSeq" id="XP_001395491.1">
    <property type="nucleotide sequence ID" value="XM_001395454.2"/>
</dbReference>
<dbReference type="SMR" id="A2QZA2"/>
<dbReference type="GlyCosmos" id="A2QZA2">
    <property type="glycosylation" value="1 site, No reported glycans"/>
</dbReference>
<dbReference type="EnsemblFungi" id="CAK46187">
    <property type="protein sequence ID" value="CAK46187"/>
    <property type="gene ID" value="An12g04170"/>
</dbReference>
<dbReference type="GeneID" id="4985765"/>
<dbReference type="KEGG" id="ang:An12g04170"/>
<dbReference type="VEuPathDB" id="FungiDB:An12g04170"/>
<dbReference type="HOGENOM" id="CLU_019326_1_0_1"/>
<dbReference type="Proteomes" id="UP000006706">
    <property type="component" value="Chromosome 3L"/>
</dbReference>
<dbReference type="GO" id="GO:0005576">
    <property type="term" value="C:extracellular region"/>
    <property type="evidence" value="ECO:0007669"/>
    <property type="project" value="UniProtKB-SubCell"/>
</dbReference>
<dbReference type="GO" id="GO:0005773">
    <property type="term" value="C:vacuole"/>
    <property type="evidence" value="ECO:0007669"/>
    <property type="project" value="UniProtKB-SubCell"/>
</dbReference>
<dbReference type="GO" id="GO:0008270">
    <property type="term" value="F:zinc ion binding"/>
    <property type="evidence" value="ECO:0007669"/>
    <property type="project" value="InterPro"/>
</dbReference>
<dbReference type="GO" id="GO:0071555">
    <property type="term" value="P:cell wall organization"/>
    <property type="evidence" value="ECO:0007669"/>
    <property type="project" value="UniProtKB-KW"/>
</dbReference>
<dbReference type="GO" id="GO:0006508">
    <property type="term" value="P:proteolysis"/>
    <property type="evidence" value="ECO:0007669"/>
    <property type="project" value="InterPro"/>
</dbReference>
<dbReference type="CDD" id="cd03860">
    <property type="entry name" value="M14_CP_A-B_like"/>
    <property type="match status" value="1"/>
</dbReference>
<dbReference type="FunFam" id="3.40.630.10:FF:000060">
    <property type="entry name" value="Putative metallocarboxypeptidase ecm14"/>
    <property type="match status" value="1"/>
</dbReference>
<dbReference type="Gene3D" id="3.40.630.10">
    <property type="entry name" value="Zn peptidases"/>
    <property type="match status" value="1"/>
</dbReference>
<dbReference type="InterPro" id="IPR000834">
    <property type="entry name" value="Peptidase_M14"/>
</dbReference>
<dbReference type="PANTHER" id="PTHR11705:SF147">
    <property type="entry name" value="INACTIVE METALLOCARBOXYPEPTIDASE ECM14"/>
    <property type="match status" value="1"/>
</dbReference>
<dbReference type="PANTHER" id="PTHR11705">
    <property type="entry name" value="PROTEASE FAMILY M14 CARBOXYPEPTIDASE A,B"/>
    <property type="match status" value="1"/>
</dbReference>
<dbReference type="Pfam" id="PF00246">
    <property type="entry name" value="Peptidase_M14"/>
    <property type="match status" value="1"/>
</dbReference>
<dbReference type="PRINTS" id="PR00765">
    <property type="entry name" value="CRBOXYPTASEA"/>
</dbReference>
<dbReference type="SMART" id="SM00631">
    <property type="entry name" value="Zn_pept"/>
    <property type="match status" value="1"/>
</dbReference>
<dbReference type="SUPFAM" id="SSF53187">
    <property type="entry name" value="Zn-dependent exopeptidases"/>
    <property type="match status" value="1"/>
</dbReference>
<dbReference type="PROSITE" id="PS00132">
    <property type="entry name" value="CARBOXYPEPT_ZN_1"/>
    <property type="match status" value="1"/>
</dbReference>
<dbReference type="PROSITE" id="PS52035">
    <property type="entry name" value="PEPTIDASE_M14"/>
    <property type="match status" value="1"/>
</dbReference>
<evidence type="ECO:0000250" key="1">
    <source>
        <dbReference type="UniProtKB" id="P00730"/>
    </source>
</evidence>
<evidence type="ECO:0000250" key="2">
    <source>
        <dbReference type="UniProtKB" id="P15085"/>
    </source>
</evidence>
<evidence type="ECO:0000250" key="3">
    <source>
        <dbReference type="UniProtKB" id="P38836"/>
    </source>
</evidence>
<evidence type="ECO:0000255" key="4"/>
<evidence type="ECO:0000255" key="5">
    <source>
        <dbReference type="PROSITE-ProRule" id="PRU01379"/>
    </source>
</evidence>
<evidence type="ECO:0000256" key="6">
    <source>
        <dbReference type="SAM" id="MobiDB-lite"/>
    </source>
</evidence>
<evidence type="ECO:0000305" key="7"/>
<accession>A2QZA2</accession>
<feature type="signal peptide" evidence="4">
    <location>
        <begin position="1"/>
        <end position="20"/>
    </location>
</feature>
<feature type="propeptide" id="PRO_0000453238" evidence="3">
    <location>
        <begin position="21"/>
        <end position="171"/>
    </location>
</feature>
<feature type="chain" id="PRO_5000220731" description="Inactive metallocarboxypeptidase ecm14">
    <location>
        <begin position="172"/>
        <end position="621"/>
    </location>
</feature>
<feature type="domain" description="Peptidase M14" evidence="5">
    <location>
        <begin position="199"/>
        <end position="521"/>
    </location>
</feature>
<feature type="region of interest" description="Disordered" evidence="6">
    <location>
        <begin position="544"/>
        <end position="621"/>
    </location>
</feature>
<feature type="compositionally biased region" description="Basic and acidic residues" evidence="6">
    <location>
        <begin position="544"/>
        <end position="554"/>
    </location>
</feature>
<feature type="compositionally biased region" description="Acidic residues" evidence="6">
    <location>
        <begin position="570"/>
        <end position="607"/>
    </location>
</feature>
<feature type="binding site" evidence="1">
    <location>
        <begin position="262"/>
        <end position="265"/>
    </location>
    <ligand>
        <name>substrate</name>
    </ligand>
</feature>
<feature type="binding site" evidence="5">
    <location>
        <position position="262"/>
    </location>
    <ligand>
        <name>Zn(2+)</name>
        <dbReference type="ChEBI" id="CHEBI:29105"/>
        <note>catalytic</note>
    </ligand>
</feature>
<feature type="binding site" evidence="5">
    <location>
        <position position="265"/>
    </location>
    <ligand>
        <name>Zn(2+)</name>
        <dbReference type="ChEBI" id="CHEBI:29105"/>
        <note>catalytic</note>
    </ligand>
</feature>
<feature type="binding site" evidence="1">
    <location>
        <position position="320"/>
    </location>
    <ligand>
        <name>substrate</name>
    </ligand>
</feature>
<feature type="binding site" evidence="1">
    <location>
        <begin position="337"/>
        <end position="338"/>
    </location>
    <ligand>
        <name>substrate</name>
    </ligand>
</feature>
<feature type="binding site" evidence="5">
    <location>
        <position position="394"/>
    </location>
    <ligand>
        <name>Zn(2+)</name>
        <dbReference type="ChEBI" id="CHEBI:29105"/>
        <note>catalytic</note>
    </ligand>
</feature>
<feature type="binding site" evidence="1">
    <location>
        <begin position="395"/>
        <end position="396"/>
    </location>
    <ligand>
        <name>substrate</name>
    </ligand>
</feature>
<feature type="glycosylation site" description="N-linked (GlcNAc...) asparagine" evidence="4">
    <location>
        <position position="378"/>
    </location>
</feature>
<feature type="disulfide bond" evidence="2">
    <location>
        <begin position="331"/>
        <end position="354"/>
    </location>
</feature>
<gene>
    <name type="primary">ecm14</name>
    <name type="ORF">An12g04170</name>
</gene>
<comment type="function">
    <text evidence="3">Inactive carboxypeptidase that may play a role in cell wall organization and biogenesis.</text>
</comment>
<comment type="cofactor">
    <cofactor evidence="1">
        <name>Zn(2+)</name>
        <dbReference type="ChEBI" id="CHEBI:29105"/>
    </cofactor>
    <text evidence="1">Binds 1 zinc ion per subunit.</text>
</comment>
<comment type="subcellular location">
    <subcellularLocation>
        <location evidence="3">Vacuole</location>
    </subcellularLocation>
    <subcellularLocation>
        <location evidence="3">Secreted</location>
    </subcellularLocation>
</comment>
<comment type="similarity">
    <text evidence="7">Belongs to the peptidase M14 family.</text>
</comment>
<comment type="caution">
    <text evidence="3">Lacks the conserved Glu residue in position 487 essential for carbopeptidase activity. The mature form lacks catalytic activity towards synthetic peptide substrates.</text>
</comment>
<reference key="1">
    <citation type="journal article" date="2007" name="Nat. Biotechnol.">
        <title>Genome sequencing and analysis of the versatile cell factory Aspergillus niger CBS 513.88.</title>
        <authorList>
            <person name="Pel H.J."/>
            <person name="de Winde J.H."/>
            <person name="Archer D.B."/>
            <person name="Dyer P.S."/>
            <person name="Hofmann G."/>
            <person name="Schaap P.J."/>
            <person name="Turner G."/>
            <person name="de Vries R.P."/>
            <person name="Albang R."/>
            <person name="Albermann K."/>
            <person name="Andersen M.R."/>
            <person name="Bendtsen J.D."/>
            <person name="Benen J.A.E."/>
            <person name="van den Berg M."/>
            <person name="Breestraat S."/>
            <person name="Caddick M.X."/>
            <person name="Contreras R."/>
            <person name="Cornell M."/>
            <person name="Coutinho P.M."/>
            <person name="Danchin E.G.J."/>
            <person name="Debets A.J.M."/>
            <person name="Dekker P."/>
            <person name="van Dijck P.W.M."/>
            <person name="van Dijk A."/>
            <person name="Dijkhuizen L."/>
            <person name="Driessen A.J.M."/>
            <person name="d'Enfert C."/>
            <person name="Geysens S."/>
            <person name="Goosen C."/>
            <person name="Groot G.S.P."/>
            <person name="de Groot P.W.J."/>
            <person name="Guillemette T."/>
            <person name="Henrissat B."/>
            <person name="Herweijer M."/>
            <person name="van den Hombergh J.P.T.W."/>
            <person name="van den Hondel C.A.M.J.J."/>
            <person name="van der Heijden R.T.J.M."/>
            <person name="van der Kaaij R.M."/>
            <person name="Klis F.M."/>
            <person name="Kools H.J."/>
            <person name="Kubicek C.P."/>
            <person name="van Kuyk P.A."/>
            <person name="Lauber J."/>
            <person name="Lu X."/>
            <person name="van der Maarel M.J.E.C."/>
            <person name="Meulenberg R."/>
            <person name="Menke H."/>
            <person name="Mortimer M.A."/>
            <person name="Nielsen J."/>
            <person name="Oliver S.G."/>
            <person name="Olsthoorn M."/>
            <person name="Pal K."/>
            <person name="van Peij N.N.M.E."/>
            <person name="Ram A.F.J."/>
            <person name="Rinas U."/>
            <person name="Roubos J.A."/>
            <person name="Sagt C.M.J."/>
            <person name="Schmoll M."/>
            <person name="Sun J."/>
            <person name="Ussery D."/>
            <person name="Varga J."/>
            <person name="Vervecken W."/>
            <person name="van de Vondervoort P.J.J."/>
            <person name="Wedler H."/>
            <person name="Woesten H.A.B."/>
            <person name="Zeng A.-P."/>
            <person name="van Ooyen A.J.J."/>
            <person name="Visser J."/>
            <person name="Stam H."/>
        </authorList>
    </citation>
    <scope>NUCLEOTIDE SEQUENCE [LARGE SCALE GENOMIC DNA]</scope>
    <source>
        <strain>ATCC MYA-4892 / CBS 513.88 / FGSC A1513</strain>
    </source>
</reference>
<protein>
    <recommendedName>
        <fullName evidence="7">Inactive metallocarboxypeptidase ecm14</fullName>
    </recommendedName>
</protein>
<organism>
    <name type="scientific">Aspergillus niger (strain ATCC MYA-4892 / CBS 513.88 / FGSC A1513)</name>
    <dbReference type="NCBI Taxonomy" id="425011"/>
    <lineage>
        <taxon>Eukaryota</taxon>
        <taxon>Fungi</taxon>
        <taxon>Dikarya</taxon>
        <taxon>Ascomycota</taxon>
        <taxon>Pezizomycotina</taxon>
        <taxon>Eurotiomycetes</taxon>
        <taxon>Eurotiomycetidae</taxon>
        <taxon>Eurotiales</taxon>
        <taxon>Aspergillaceae</taxon>
        <taxon>Aspergillus</taxon>
        <taxon>Aspergillus subgen. Circumdati</taxon>
    </lineage>
</organism>
<name>ECM14_ASPNC</name>